<proteinExistence type="inferred from homology"/>
<name>PANC_ACIF2</name>
<organism>
    <name type="scientific">Acidithiobacillus ferrooxidans (strain ATCC 23270 / DSM 14882 / CIP 104768 / NCIMB 8455)</name>
    <name type="common">Ferrobacillus ferrooxidans (strain ATCC 23270)</name>
    <dbReference type="NCBI Taxonomy" id="243159"/>
    <lineage>
        <taxon>Bacteria</taxon>
        <taxon>Pseudomonadati</taxon>
        <taxon>Pseudomonadota</taxon>
        <taxon>Acidithiobacillia</taxon>
        <taxon>Acidithiobacillales</taxon>
        <taxon>Acidithiobacillaceae</taxon>
        <taxon>Acidithiobacillus</taxon>
    </lineage>
</organism>
<accession>B7JBM7</accession>
<sequence length="278" mass="30789">MAIFKDIAGLRQWRQSLHGTLALVPTMGNLHEGHLALVRLAANRAEHVLVSIYVNPLQFGPGEDFANYPRTLDQDLQRLHEAGCQTVFTPDDGLMYPRGRQDISIVMPPRSLSKVLCGASRPGHFAGVCTVLSKLLHMVAPEILILGEKDYQQLRIVQQMVADLNLNVQVLPGPLQREADGLAYSSRNIYLNLAERQVAPLLAETLFDLARRSTNDAAVSDLAATGWERLERAGFLPEYLELRDAQTLQSLALPQPGARWFAAARLGQIRLIDNVIIS</sequence>
<feature type="chain" id="PRO_1000118138" description="Pantothenate synthetase">
    <location>
        <begin position="1"/>
        <end position="278"/>
    </location>
</feature>
<feature type="active site" description="Proton donor" evidence="1">
    <location>
        <position position="34"/>
    </location>
</feature>
<feature type="binding site" evidence="1">
    <location>
        <begin position="27"/>
        <end position="34"/>
    </location>
    <ligand>
        <name>ATP</name>
        <dbReference type="ChEBI" id="CHEBI:30616"/>
    </ligand>
</feature>
<feature type="binding site" evidence="1">
    <location>
        <position position="58"/>
    </location>
    <ligand>
        <name>(R)-pantoate</name>
        <dbReference type="ChEBI" id="CHEBI:15980"/>
    </ligand>
</feature>
<feature type="binding site" evidence="1">
    <location>
        <position position="58"/>
    </location>
    <ligand>
        <name>beta-alanine</name>
        <dbReference type="ChEBI" id="CHEBI:57966"/>
    </ligand>
</feature>
<feature type="binding site" evidence="1">
    <location>
        <begin position="147"/>
        <end position="150"/>
    </location>
    <ligand>
        <name>ATP</name>
        <dbReference type="ChEBI" id="CHEBI:30616"/>
    </ligand>
</feature>
<feature type="binding site" evidence="1">
    <location>
        <position position="153"/>
    </location>
    <ligand>
        <name>(R)-pantoate</name>
        <dbReference type="ChEBI" id="CHEBI:15980"/>
    </ligand>
</feature>
<feature type="binding site" evidence="1">
    <location>
        <begin position="184"/>
        <end position="187"/>
    </location>
    <ligand>
        <name>ATP</name>
        <dbReference type="ChEBI" id="CHEBI:30616"/>
    </ligand>
</feature>
<keyword id="KW-0067">ATP-binding</keyword>
<keyword id="KW-0963">Cytoplasm</keyword>
<keyword id="KW-0436">Ligase</keyword>
<keyword id="KW-0547">Nucleotide-binding</keyword>
<keyword id="KW-0566">Pantothenate biosynthesis</keyword>
<keyword id="KW-1185">Reference proteome</keyword>
<gene>
    <name evidence="1" type="primary">panC</name>
    <name type="ordered locus">AFE_1770</name>
</gene>
<reference key="1">
    <citation type="journal article" date="2008" name="BMC Genomics">
        <title>Acidithiobacillus ferrooxidans metabolism: from genome sequence to industrial applications.</title>
        <authorList>
            <person name="Valdes J."/>
            <person name="Pedroso I."/>
            <person name="Quatrini R."/>
            <person name="Dodson R.J."/>
            <person name="Tettelin H."/>
            <person name="Blake R. II"/>
            <person name="Eisen J.A."/>
            <person name="Holmes D.S."/>
        </authorList>
    </citation>
    <scope>NUCLEOTIDE SEQUENCE [LARGE SCALE GENOMIC DNA]</scope>
    <source>
        <strain>ATCC 23270 / DSM 14882 / CIP 104768 / NCIMB 8455</strain>
    </source>
</reference>
<dbReference type="EC" id="6.3.2.1" evidence="1"/>
<dbReference type="EMBL" id="CP001219">
    <property type="protein sequence ID" value="ACK78678.1"/>
    <property type="molecule type" value="Genomic_DNA"/>
</dbReference>
<dbReference type="RefSeq" id="WP_012536744.1">
    <property type="nucleotide sequence ID" value="NC_011761.1"/>
</dbReference>
<dbReference type="SMR" id="B7JBM7"/>
<dbReference type="STRING" id="243159.AFE_1770"/>
<dbReference type="PaxDb" id="243159-AFE_1770"/>
<dbReference type="GeneID" id="65280939"/>
<dbReference type="KEGG" id="afr:AFE_1770"/>
<dbReference type="eggNOG" id="COG0414">
    <property type="taxonomic scope" value="Bacteria"/>
</dbReference>
<dbReference type="HOGENOM" id="CLU_047148_0_0_6"/>
<dbReference type="UniPathway" id="UPA00028">
    <property type="reaction ID" value="UER00005"/>
</dbReference>
<dbReference type="Proteomes" id="UP000001362">
    <property type="component" value="Chromosome"/>
</dbReference>
<dbReference type="GO" id="GO:0005829">
    <property type="term" value="C:cytosol"/>
    <property type="evidence" value="ECO:0007669"/>
    <property type="project" value="TreeGrafter"/>
</dbReference>
<dbReference type="GO" id="GO:0005524">
    <property type="term" value="F:ATP binding"/>
    <property type="evidence" value="ECO:0007669"/>
    <property type="project" value="UniProtKB-KW"/>
</dbReference>
<dbReference type="GO" id="GO:0004592">
    <property type="term" value="F:pantoate-beta-alanine ligase activity"/>
    <property type="evidence" value="ECO:0007669"/>
    <property type="project" value="UniProtKB-UniRule"/>
</dbReference>
<dbReference type="GO" id="GO:0015940">
    <property type="term" value="P:pantothenate biosynthetic process"/>
    <property type="evidence" value="ECO:0007669"/>
    <property type="project" value="UniProtKB-UniRule"/>
</dbReference>
<dbReference type="CDD" id="cd00560">
    <property type="entry name" value="PanC"/>
    <property type="match status" value="1"/>
</dbReference>
<dbReference type="Gene3D" id="3.40.50.620">
    <property type="entry name" value="HUPs"/>
    <property type="match status" value="1"/>
</dbReference>
<dbReference type="Gene3D" id="3.30.1300.10">
    <property type="entry name" value="Pantoate-beta-alanine ligase, C-terminal domain"/>
    <property type="match status" value="1"/>
</dbReference>
<dbReference type="HAMAP" id="MF_00158">
    <property type="entry name" value="PanC"/>
    <property type="match status" value="1"/>
</dbReference>
<dbReference type="InterPro" id="IPR003721">
    <property type="entry name" value="Pantoate_ligase"/>
</dbReference>
<dbReference type="InterPro" id="IPR042176">
    <property type="entry name" value="Pantoate_ligase_C"/>
</dbReference>
<dbReference type="InterPro" id="IPR014729">
    <property type="entry name" value="Rossmann-like_a/b/a_fold"/>
</dbReference>
<dbReference type="NCBIfam" id="TIGR00018">
    <property type="entry name" value="panC"/>
    <property type="match status" value="1"/>
</dbReference>
<dbReference type="PANTHER" id="PTHR21299">
    <property type="entry name" value="CYTIDYLATE KINASE/PANTOATE-BETA-ALANINE LIGASE"/>
    <property type="match status" value="1"/>
</dbReference>
<dbReference type="PANTHER" id="PTHR21299:SF1">
    <property type="entry name" value="PANTOATE--BETA-ALANINE LIGASE"/>
    <property type="match status" value="1"/>
</dbReference>
<dbReference type="Pfam" id="PF02569">
    <property type="entry name" value="Pantoate_ligase"/>
    <property type="match status" value="1"/>
</dbReference>
<dbReference type="SUPFAM" id="SSF52374">
    <property type="entry name" value="Nucleotidylyl transferase"/>
    <property type="match status" value="1"/>
</dbReference>
<protein>
    <recommendedName>
        <fullName evidence="1">Pantothenate synthetase</fullName>
        <shortName evidence="1">PS</shortName>
        <ecNumber evidence="1">6.3.2.1</ecNumber>
    </recommendedName>
    <alternativeName>
        <fullName evidence="1">Pantoate--beta-alanine ligase</fullName>
    </alternativeName>
    <alternativeName>
        <fullName evidence="1">Pantoate-activating enzyme</fullName>
    </alternativeName>
</protein>
<comment type="function">
    <text evidence="1">Catalyzes the condensation of pantoate with beta-alanine in an ATP-dependent reaction via a pantoyl-adenylate intermediate.</text>
</comment>
<comment type="catalytic activity">
    <reaction evidence="1">
        <text>(R)-pantoate + beta-alanine + ATP = (R)-pantothenate + AMP + diphosphate + H(+)</text>
        <dbReference type="Rhea" id="RHEA:10912"/>
        <dbReference type="ChEBI" id="CHEBI:15378"/>
        <dbReference type="ChEBI" id="CHEBI:15980"/>
        <dbReference type="ChEBI" id="CHEBI:29032"/>
        <dbReference type="ChEBI" id="CHEBI:30616"/>
        <dbReference type="ChEBI" id="CHEBI:33019"/>
        <dbReference type="ChEBI" id="CHEBI:57966"/>
        <dbReference type="ChEBI" id="CHEBI:456215"/>
        <dbReference type="EC" id="6.3.2.1"/>
    </reaction>
</comment>
<comment type="pathway">
    <text evidence="1">Cofactor biosynthesis; (R)-pantothenate biosynthesis; (R)-pantothenate from (R)-pantoate and beta-alanine: step 1/1.</text>
</comment>
<comment type="subunit">
    <text evidence="1">Homodimer.</text>
</comment>
<comment type="subcellular location">
    <subcellularLocation>
        <location evidence="1">Cytoplasm</location>
    </subcellularLocation>
</comment>
<comment type="miscellaneous">
    <text evidence="1">The reaction proceeds by a bi uni uni bi ping pong mechanism.</text>
</comment>
<comment type="similarity">
    <text evidence="1">Belongs to the pantothenate synthetase family.</text>
</comment>
<evidence type="ECO:0000255" key="1">
    <source>
        <dbReference type="HAMAP-Rule" id="MF_00158"/>
    </source>
</evidence>